<accession>Q92BQ1</accession>
<keyword id="KW-0030">Aminoacyl-tRNA synthetase</keyword>
<keyword id="KW-0067">ATP-binding</keyword>
<keyword id="KW-0963">Cytoplasm</keyword>
<keyword id="KW-0436">Ligase</keyword>
<keyword id="KW-0547">Nucleotide-binding</keyword>
<keyword id="KW-0648">Protein biosynthesis</keyword>
<feature type="chain" id="PRO_0000072846" description="Glycine--tRNA ligase alpha subunit">
    <location>
        <begin position="1"/>
        <end position="296"/>
    </location>
</feature>
<proteinExistence type="inferred from homology"/>
<sequence length="296" mass="34385">MNLQTMIRTLQDYWSEQDCIMLQSYDVEKGAGTMSPYTFLKAIGPEPWKAGYVEPSRRPADGRYGENPNRLFQHHQFQVVMKPSPDNIQELYLGSLEKLGINPLEHDIRFVEDNWENPSLGCAGLGWEVWLDGMEITQFTYFQQVGGLECFPVTSEITYGVERLASYIQDKENVFDLEWTEGISYRDIFFQAEFENSKYAFETSNTDMLLTLFDTYEREAARQMQEGLVFPAYDYVLKCSHTFNLLDARGVVSVTERAQYIGRIRNLARRIAKTFYESREKLGFPLVKEEGGKRHE</sequence>
<gene>
    <name evidence="1" type="primary">glyQ</name>
    <name type="ordered locus">lin1496</name>
</gene>
<reference key="1">
    <citation type="journal article" date="2001" name="Science">
        <title>Comparative genomics of Listeria species.</title>
        <authorList>
            <person name="Glaser P."/>
            <person name="Frangeul L."/>
            <person name="Buchrieser C."/>
            <person name="Rusniok C."/>
            <person name="Amend A."/>
            <person name="Baquero F."/>
            <person name="Berche P."/>
            <person name="Bloecker H."/>
            <person name="Brandt P."/>
            <person name="Chakraborty T."/>
            <person name="Charbit A."/>
            <person name="Chetouani F."/>
            <person name="Couve E."/>
            <person name="de Daruvar A."/>
            <person name="Dehoux P."/>
            <person name="Domann E."/>
            <person name="Dominguez-Bernal G."/>
            <person name="Duchaud E."/>
            <person name="Durant L."/>
            <person name="Dussurget O."/>
            <person name="Entian K.-D."/>
            <person name="Fsihi H."/>
            <person name="Garcia-del Portillo F."/>
            <person name="Garrido P."/>
            <person name="Gautier L."/>
            <person name="Goebel W."/>
            <person name="Gomez-Lopez N."/>
            <person name="Hain T."/>
            <person name="Hauf J."/>
            <person name="Jackson D."/>
            <person name="Jones L.-M."/>
            <person name="Kaerst U."/>
            <person name="Kreft J."/>
            <person name="Kuhn M."/>
            <person name="Kunst F."/>
            <person name="Kurapkat G."/>
            <person name="Madueno E."/>
            <person name="Maitournam A."/>
            <person name="Mata Vicente J."/>
            <person name="Ng E."/>
            <person name="Nedjari H."/>
            <person name="Nordsiek G."/>
            <person name="Novella S."/>
            <person name="de Pablos B."/>
            <person name="Perez-Diaz J.-C."/>
            <person name="Purcell R."/>
            <person name="Remmel B."/>
            <person name="Rose M."/>
            <person name="Schlueter T."/>
            <person name="Simoes N."/>
            <person name="Tierrez A."/>
            <person name="Vazquez-Boland J.-A."/>
            <person name="Voss H."/>
            <person name="Wehland J."/>
            <person name="Cossart P."/>
        </authorList>
    </citation>
    <scope>NUCLEOTIDE SEQUENCE [LARGE SCALE GENOMIC DNA]</scope>
    <source>
        <strain>ATCC BAA-680 / CLIP 11262</strain>
    </source>
</reference>
<dbReference type="EC" id="6.1.1.14" evidence="1"/>
<dbReference type="EMBL" id="AL596168">
    <property type="protein sequence ID" value="CAC96727.1"/>
    <property type="molecule type" value="Genomic_DNA"/>
</dbReference>
<dbReference type="PIR" id="AG1619">
    <property type="entry name" value="AG1619"/>
</dbReference>
<dbReference type="RefSeq" id="WP_010991562.1">
    <property type="nucleotide sequence ID" value="NC_003212.1"/>
</dbReference>
<dbReference type="SMR" id="Q92BQ1"/>
<dbReference type="STRING" id="272626.gene:17565827"/>
<dbReference type="KEGG" id="lin:glyQ"/>
<dbReference type="eggNOG" id="COG0752">
    <property type="taxonomic scope" value="Bacteria"/>
</dbReference>
<dbReference type="HOGENOM" id="CLU_057066_1_0_9"/>
<dbReference type="OrthoDB" id="9802183at2"/>
<dbReference type="Proteomes" id="UP000002513">
    <property type="component" value="Chromosome"/>
</dbReference>
<dbReference type="GO" id="GO:0005829">
    <property type="term" value="C:cytosol"/>
    <property type="evidence" value="ECO:0007669"/>
    <property type="project" value="TreeGrafter"/>
</dbReference>
<dbReference type="GO" id="GO:0005524">
    <property type="term" value="F:ATP binding"/>
    <property type="evidence" value="ECO:0007669"/>
    <property type="project" value="UniProtKB-UniRule"/>
</dbReference>
<dbReference type="GO" id="GO:0140096">
    <property type="term" value="F:catalytic activity, acting on a protein"/>
    <property type="evidence" value="ECO:0007669"/>
    <property type="project" value="UniProtKB-ARBA"/>
</dbReference>
<dbReference type="GO" id="GO:0004820">
    <property type="term" value="F:glycine-tRNA ligase activity"/>
    <property type="evidence" value="ECO:0007669"/>
    <property type="project" value="UniProtKB-UniRule"/>
</dbReference>
<dbReference type="GO" id="GO:0016740">
    <property type="term" value="F:transferase activity"/>
    <property type="evidence" value="ECO:0007669"/>
    <property type="project" value="UniProtKB-ARBA"/>
</dbReference>
<dbReference type="GO" id="GO:0006426">
    <property type="term" value="P:glycyl-tRNA aminoacylation"/>
    <property type="evidence" value="ECO:0007669"/>
    <property type="project" value="UniProtKB-UniRule"/>
</dbReference>
<dbReference type="CDD" id="cd00733">
    <property type="entry name" value="GlyRS_alpha_core"/>
    <property type="match status" value="1"/>
</dbReference>
<dbReference type="FunFam" id="3.30.930.10:FF:000006">
    <property type="entry name" value="Glycine--tRNA ligase alpha subunit"/>
    <property type="match status" value="1"/>
</dbReference>
<dbReference type="Gene3D" id="3.30.930.10">
    <property type="entry name" value="Bira Bifunctional Protein, Domain 2"/>
    <property type="match status" value="1"/>
</dbReference>
<dbReference type="Gene3D" id="1.20.58.180">
    <property type="entry name" value="Class II aaRS and biotin synthetases, domain 2"/>
    <property type="match status" value="1"/>
</dbReference>
<dbReference type="HAMAP" id="MF_00254">
    <property type="entry name" value="Gly_tRNA_synth_alpha"/>
    <property type="match status" value="1"/>
</dbReference>
<dbReference type="InterPro" id="IPR045864">
    <property type="entry name" value="aa-tRNA-synth_II/BPL/LPL"/>
</dbReference>
<dbReference type="InterPro" id="IPR006194">
    <property type="entry name" value="Gly-tRNA-synth_heterodimer"/>
</dbReference>
<dbReference type="InterPro" id="IPR002310">
    <property type="entry name" value="Gly-tRNA_ligase_asu"/>
</dbReference>
<dbReference type="NCBIfam" id="TIGR00388">
    <property type="entry name" value="glyQ"/>
    <property type="match status" value="1"/>
</dbReference>
<dbReference type="NCBIfam" id="NF006827">
    <property type="entry name" value="PRK09348.1"/>
    <property type="match status" value="1"/>
</dbReference>
<dbReference type="PANTHER" id="PTHR30075:SF2">
    <property type="entry name" value="GLYCINE--TRNA LIGASE, CHLOROPLASTIC_MITOCHONDRIAL 2"/>
    <property type="match status" value="1"/>
</dbReference>
<dbReference type="PANTHER" id="PTHR30075">
    <property type="entry name" value="GLYCYL-TRNA SYNTHETASE"/>
    <property type="match status" value="1"/>
</dbReference>
<dbReference type="Pfam" id="PF02091">
    <property type="entry name" value="tRNA-synt_2e"/>
    <property type="match status" value="1"/>
</dbReference>
<dbReference type="PRINTS" id="PR01044">
    <property type="entry name" value="TRNASYNTHGA"/>
</dbReference>
<dbReference type="SUPFAM" id="SSF55681">
    <property type="entry name" value="Class II aaRS and biotin synthetases"/>
    <property type="match status" value="1"/>
</dbReference>
<dbReference type="PROSITE" id="PS50861">
    <property type="entry name" value="AA_TRNA_LIGASE_II_GLYAB"/>
    <property type="match status" value="1"/>
</dbReference>
<name>SYGA_LISIN</name>
<protein>
    <recommendedName>
        <fullName evidence="1">Glycine--tRNA ligase alpha subunit</fullName>
        <ecNumber evidence="1">6.1.1.14</ecNumber>
    </recommendedName>
    <alternativeName>
        <fullName evidence="1">Glycyl-tRNA synthetase alpha subunit</fullName>
        <shortName evidence="1">GlyRS</shortName>
    </alternativeName>
</protein>
<organism>
    <name type="scientific">Listeria innocua serovar 6a (strain ATCC BAA-680 / CLIP 11262)</name>
    <dbReference type="NCBI Taxonomy" id="272626"/>
    <lineage>
        <taxon>Bacteria</taxon>
        <taxon>Bacillati</taxon>
        <taxon>Bacillota</taxon>
        <taxon>Bacilli</taxon>
        <taxon>Bacillales</taxon>
        <taxon>Listeriaceae</taxon>
        <taxon>Listeria</taxon>
    </lineage>
</organism>
<evidence type="ECO:0000255" key="1">
    <source>
        <dbReference type="HAMAP-Rule" id="MF_00254"/>
    </source>
</evidence>
<comment type="catalytic activity">
    <reaction evidence="1">
        <text>tRNA(Gly) + glycine + ATP = glycyl-tRNA(Gly) + AMP + diphosphate</text>
        <dbReference type="Rhea" id="RHEA:16013"/>
        <dbReference type="Rhea" id="RHEA-COMP:9664"/>
        <dbReference type="Rhea" id="RHEA-COMP:9683"/>
        <dbReference type="ChEBI" id="CHEBI:30616"/>
        <dbReference type="ChEBI" id="CHEBI:33019"/>
        <dbReference type="ChEBI" id="CHEBI:57305"/>
        <dbReference type="ChEBI" id="CHEBI:78442"/>
        <dbReference type="ChEBI" id="CHEBI:78522"/>
        <dbReference type="ChEBI" id="CHEBI:456215"/>
        <dbReference type="EC" id="6.1.1.14"/>
    </reaction>
</comment>
<comment type="subunit">
    <text evidence="1">Tetramer of two alpha and two beta subunits.</text>
</comment>
<comment type="subcellular location">
    <subcellularLocation>
        <location evidence="1">Cytoplasm</location>
    </subcellularLocation>
</comment>
<comment type="similarity">
    <text evidence="1">Belongs to the class-II aminoacyl-tRNA synthetase family.</text>
</comment>